<reference key="1">
    <citation type="journal article" date="2003" name="Proc. Natl. Acad. Sci. U.S.A.">
        <title>The complete genome sequence of Chromobacterium violaceum reveals remarkable and exploitable bacterial adaptability.</title>
        <authorList>
            <person name="Vasconcelos A.T.R."/>
            <person name="de Almeida D.F."/>
            <person name="Hungria M."/>
            <person name="Guimaraes C.T."/>
            <person name="Antonio R.V."/>
            <person name="Almeida F.C."/>
            <person name="de Almeida L.G.P."/>
            <person name="de Almeida R."/>
            <person name="Alves-Gomes J.A."/>
            <person name="Andrade E.M."/>
            <person name="Araripe J."/>
            <person name="de Araujo M.F.F."/>
            <person name="Astolfi-Filho S."/>
            <person name="Azevedo V."/>
            <person name="Baptista A.J."/>
            <person name="Bataus L.A.M."/>
            <person name="Batista J.S."/>
            <person name="Belo A."/>
            <person name="van den Berg C."/>
            <person name="Bogo M."/>
            <person name="Bonatto S."/>
            <person name="Bordignon J."/>
            <person name="Brigido M.M."/>
            <person name="Brito C.A."/>
            <person name="Brocchi M."/>
            <person name="Burity H.A."/>
            <person name="Camargo A.A."/>
            <person name="Cardoso D.D.P."/>
            <person name="Carneiro N.P."/>
            <person name="Carraro D.M."/>
            <person name="Carvalho C.M.B."/>
            <person name="Cascardo J.C.M."/>
            <person name="Cavada B.S."/>
            <person name="Chueire L.M.O."/>
            <person name="Creczynski-Pasa T.B."/>
            <person name="Cunha-Junior N.C."/>
            <person name="Fagundes N."/>
            <person name="Falcao C.L."/>
            <person name="Fantinatti F."/>
            <person name="Farias I.P."/>
            <person name="Felipe M.S.S."/>
            <person name="Ferrari L.P."/>
            <person name="Ferro J.A."/>
            <person name="Ferro M.I.T."/>
            <person name="Franco G.R."/>
            <person name="Freitas N.S.A."/>
            <person name="Furlan L.R."/>
            <person name="Gazzinelli R.T."/>
            <person name="Gomes E.A."/>
            <person name="Goncalves P.R."/>
            <person name="Grangeiro T.B."/>
            <person name="Grattapaglia D."/>
            <person name="Grisard E.C."/>
            <person name="Hanna E.S."/>
            <person name="Jardim S.N."/>
            <person name="Laurino J."/>
            <person name="Leoi L.C.T."/>
            <person name="Lima L.F.A."/>
            <person name="Loureiro M.F."/>
            <person name="Lyra M.C.C.P."/>
            <person name="Madeira H.M.F."/>
            <person name="Manfio G.P."/>
            <person name="Maranhao A.Q."/>
            <person name="Martins W.S."/>
            <person name="di Mauro S.M.Z."/>
            <person name="de Medeiros S.R.B."/>
            <person name="Meissner R.V."/>
            <person name="Moreira M.A.M."/>
            <person name="Nascimento F.F."/>
            <person name="Nicolas M.F."/>
            <person name="Oliveira J.G."/>
            <person name="Oliveira S.C."/>
            <person name="Paixao R.F.C."/>
            <person name="Parente J.A."/>
            <person name="Pedrosa F.O."/>
            <person name="Pena S.D.J."/>
            <person name="Pereira J.O."/>
            <person name="Pereira M."/>
            <person name="Pinto L.S.R.C."/>
            <person name="Pinto L.S."/>
            <person name="Porto J.I.R."/>
            <person name="Potrich D.P."/>
            <person name="Ramalho-Neto C.E."/>
            <person name="Reis A.M.M."/>
            <person name="Rigo L.U."/>
            <person name="Rondinelli E."/>
            <person name="Santos E.B.P."/>
            <person name="Santos F.R."/>
            <person name="Schneider M.P.C."/>
            <person name="Seuanez H.N."/>
            <person name="Silva A.M.R."/>
            <person name="da Silva A.L.C."/>
            <person name="Silva D.W."/>
            <person name="Silva R."/>
            <person name="Simoes I.C."/>
            <person name="Simon D."/>
            <person name="Soares C.M.A."/>
            <person name="Soares R.B.A."/>
            <person name="Souza E.M."/>
            <person name="Souza K.R.L."/>
            <person name="Souza R.C."/>
            <person name="Steffens M.B.R."/>
            <person name="Steindel M."/>
            <person name="Teixeira S.R."/>
            <person name="Urmenyi T."/>
            <person name="Vettore A."/>
            <person name="Wassem R."/>
            <person name="Zaha A."/>
            <person name="Simpson A.J.G."/>
        </authorList>
    </citation>
    <scope>NUCLEOTIDE SEQUENCE [LARGE SCALE GENOMIC DNA]</scope>
    <source>
        <strain>ATCC 12472 / DSM 30191 / JCM 1249 / CCUG 213 / NBRC 12614 / NCIMB 9131 / NCTC 9757 / MK</strain>
    </source>
</reference>
<gene>
    <name evidence="1" type="primary">dapF</name>
    <name type="ordered locus">CV_2528</name>
</gene>
<proteinExistence type="inferred from homology"/>
<organism>
    <name type="scientific">Chromobacterium violaceum (strain ATCC 12472 / DSM 30191 / JCM 1249 / CCUG 213 / NBRC 12614 / NCIMB 9131 / NCTC 9757 / MK)</name>
    <dbReference type="NCBI Taxonomy" id="243365"/>
    <lineage>
        <taxon>Bacteria</taxon>
        <taxon>Pseudomonadati</taxon>
        <taxon>Pseudomonadota</taxon>
        <taxon>Betaproteobacteria</taxon>
        <taxon>Neisseriales</taxon>
        <taxon>Chromobacteriaceae</taxon>
        <taxon>Chromobacterium</taxon>
    </lineage>
</organism>
<sequence length="276" mass="29652">MKLKFSKMHGLGNDFMVIDGVRQTVSLTPEQIRLLGNRQLGIGFDQLLLVEPAREAGHDFRYRIFNNDGGEVEQCGNGARCFAKFVRDQGLTGKSRIEVETARGVIAPEYLGDGLARVDMGVPRFRPADLPFLADAEALTYSLPLPEGRCEIGIASMGNPHAVQRVDDVDAAPVAEVGPAIESHPAFPQRVNAGFMQIVNRGEIRLRVYERGAGETLACGTGACAAVVCGIRQGLLDARVTVHARGGDIVIEWAGEGSPVIMTGPAVTVFQGEIEL</sequence>
<feature type="chain" id="PRO_1000011869" description="Diaminopimelate epimerase">
    <location>
        <begin position="1"/>
        <end position="276"/>
    </location>
</feature>
<feature type="active site" description="Proton donor" evidence="1">
    <location>
        <position position="75"/>
    </location>
</feature>
<feature type="active site" description="Proton acceptor" evidence="1">
    <location>
        <position position="219"/>
    </location>
</feature>
<feature type="binding site" evidence="1">
    <location>
        <position position="13"/>
    </location>
    <ligand>
        <name>substrate</name>
    </ligand>
</feature>
<feature type="binding site" evidence="1">
    <location>
        <position position="46"/>
    </location>
    <ligand>
        <name>substrate</name>
    </ligand>
</feature>
<feature type="binding site" evidence="1">
    <location>
        <position position="66"/>
    </location>
    <ligand>
        <name>substrate</name>
    </ligand>
</feature>
<feature type="binding site" evidence="1">
    <location>
        <begin position="76"/>
        <end position="77"/>
    </location>
    <ligand>
        <name>substrate</name>
    </ligand>
</feature>
<feature type="binding site" evidence="1">
    <location>
        <position position="159"/>
    </location>
    <ligand>
        <name>substrate</name>
    </ligand>
</feature>
<feature type="binding site" evidence="1">
    <location>
        <position position="192"/>
    </location>
    <ligand>
        <name>substrate</name>
    </ligand>
</feature>
<feature type="binding site" evidence="1">
    <location>
        <begin position="210"/>
        <end position="211"/>
    </location>
    <ligand>
        <name>substrate</name>
    </ligand>
</feature>
<feature type="binding site" evidence="1">
    <location>
        <begin position="220"/>
        <end position="221"/>
    </location>
    <ligand>
        <name>substrate</name>
    </ligand>
</feature>
<feature type="site" description="Could be important to modulate the pK values of the two catalytic cysteine residues" evidence="1">
    <location>
        <position position="161"/>
    </location>
</feature>
<feature type="site" description="Could be important to modulate the pK values of the two catalytic cysteine residues" evidence="1">
    <location>
        <position position="210"/>
    </location>
</feature>
<protein>
    <recommendedName>
        <fullName evidence="1">Diaminopimelate epimerase</fullName>
        <shortName evidence="1">DAP epimerase</shortName>
        <ecNumber evidence="1">5.1.1.7</ecNumber>
    </recommendedName>
    <alternativeName>
        <fullName evidence="1">PLP-independent amino acid racemase</fullName>
    </alternativeName>
</protein>
<keyword id="KW-0028">Amino-acid biosynthesis</keyword>
<keyword id="KW-0963">Cytoplasm</keyword>
<keyword id="KW-0413">Isomerase</keyword>
<keyword id="KW-0457">Lysine biosynthesis</keyword>
<keyword id="KW-1185">Reference proteome</keyword>
<name>DAPF_CHRVO</name>
<evidence type="ECO:0000255" key="1">
    <source>
        <dbReference type="HAMAP-Rule" id="MF_00197"/>
    </source>
</evidence>
<accession>Q7NV18</accession>
<comment type="function">
    <text evidence="1">Catalyzes the stereoinversion of LL-2,6-diaminopimelate (L,L-DAP) to meso-diaminopimelate (meso-DAP), a precursor of L-lysine and an essential component of the bacterial peptidoglycan.</text>
</comment>
<comment type="catalytic activity">
    <reaction evidence="1">
        <text>(2S,6S)-2,6-diaminopimelate = meso-2,6-diaminopimelate</text>
        <dbReference type="Rhea" id="RHEA:15393"/>
        <dbReference type="ChEBI" id="CHEBI:57609"/>
        <dbReference type="ChEBI" id="CHEBI:57791"/>
        <dbReference type="EC" id="5.1.1.7"/>
    </reaction>
</comment>
<comment type="pathway">
    <text evidence="1">Amino-acid biosynthesis; L-lysine biosynthesis via DAP pathway; DL-2,6-diaminopimelate from LL-2,6-diaminopimelate: step 1/1.</text>
</comment>
<comment type="subunit">
    <text evidence="1">Homodimer.</text>
</comment>
<comment type="subcellular location">
    <subcellularLocation>
        <location evidence="1">Cytoplasm</location>
    </subcellularLocation>
</comment>
<comment type="similarity">
    <text evidence="1">Belongs to the diaminopimelate epimerase family.</text>
</comment>
<dbReference type="EC" id="5.1.1.7" evidence="1"/>
<dbReference type="EMBL" id="AE016825">
    <property type="protein sequence ID" value="AAQ60199.1"/>
    <property type="molecule type" value="Genomic_DNA"/>
</dbReference>
<dbReference type="RefSeq" id="WP_011136075.1">
    <property type="nucleotide sequence ID" value="NC_005085.1"/>
</dbReference>
<dbReference type="SMR" id="Q7NV18"/>
<dbReference type="STRING" id="243365.CV_2528"/>
<dbReference type="GeneID" id="66368279"/>
<dbReference type="KEGG" id="cvi:CV_2528"/>
<dbReference type="eggNOG" id="COG0253">
    <property type="taxonomic scope" value="Bacteria"/>
</dbReference>
<dbReference type="HOGENOM" id="CLU_053306_1_1_4"/>
<dbReference type="OrthoDB" id="9805408at2"/>
<dbReference type="UniPathway" id="UPA00034">
    <property type="reaction ID" value="UER00025"/>
</dbReference>
<dbReference type="Proteomes" id="UP000001424">
    <property type="component" value="Chromosome"/>
</dbReference>
<dbReference type="GO" id="GO:0005829">
    <property type="term" value="C:cytosol"/>
    <property type="evidence" value="ECO:0007669"/>
    <property type="project" value="TreeGrafter"/>
</dbReference>
<dbReference type="GO" id="GO:0008837">
    <property type="term" value="F:diaminopimelate epimerase activity"/>
    <property type="evidence" value="ECO:0007669"/>
    <property type="project" value="UniProtKB-UniRule"/>
</dbReference>
<dbReference type="GO" id="GO:0009089">
    <property type="term" value="P:lysine biosynthetic process via diaminopimelate"/>
    <property type="evidence" value="ECO:0007669"/>
    <property type="project" value="UniProtKB-UniRule"/>
</dbReference>
<dbReference type="FunFam" id="3.10.310.10:FF:000001">
    <property type="entry name" value="Diaminopimelate epimerase"/>
    <property type="match status" value="1"/>
</dbReference>
<dbReference type="Gene3D" id="3.10.310.10">
    <property type="entry name" value="Diaminopimelate Epimerase, Chain A, domain 1"/>
    <property type="match status" value="2"/>
</dbReference>
<dbReference type="HAMAP" id="MF_00197">
    <property type="entry name" value="DAP_epimerase"/>
    <property type="match status" value="1"/>
</dbReference>
<dbReference type="InterPro" id="IPR018510">
    <property type="entry name" value="DAP_epimerase_AS"/>
</dbReference>
<dbReference type="InterPro" id="IPR001653">
    <property type="entry name" value="DAP_epimerase_DapF"/>
</dbReference>
<dbReference type="NCBIfam" id="TIGR00652">
    <property type="entry name" value="DapF"/>
    <property type="match status" value="1"/>
</dbReference>
<dbReference type="PANTHER" id="PTHR31689:SF0">
    <property type="entry name" value="DIAMINOPIMELATE EPIMERASE"/>
    <property type="match status" value="1"/>
</dbReference>
<dbReference type="PANTHER" id="PTHR31689">
    <property type="entry name" value="DIAMINOPIMELATE EPIMERASE, CHLOROPLASTIC"/>
    <property type="match status" value="1"/>
</dbReference>
<dbReference type="Pfam" id="PF01678">
    <property type="entry name" value="DAP_epimerase"/>
    <property type="match status" value="2"/>
</dbReference>
<dbReference type="SUPFAM" id="SSF54506">
    <property type="entry name" value="Diaminopimelate epimerase-like"/>
    <property type="match status" value="1"/>
</dbReference>
<dbReference type="PROSITE" id="PS01326">
    <property type="entry name" value="DAP_EPIMERASE"/>
    <property type="match status" value="1"/>
</dbReference>